<proteinExistence type="inferred from homology"/>
<protein>
    <recommendedName>
        <fullName evidence="1">Glutamyl-tRNA reductase</fullName>
        <shortName evidence="1">GluTR</shortName>
        <ecNumber evidence="1">1.2.1.70</ecNumber>
    </recommendedName>
</protein>
<sequence>MNIISVGVNHKTAPIEIRERISLSEVQNKEFVTGLVSAGIAHEAMVLSTCNRTEIYVVPAMHEVTGEYLKDYIISFREAGKDVRPEHFFSRFYCGTARHLFEVSSAIDSLILGEGQILGQVKEAYRIAAEVQTAGILLTRLCHTAFSVAKKVKTRTKIMEGAVSVSYAAVELAQKIFSNLSMKKVLLVGAGETGELAAKHMFAKNARNIVITNRTRSKSEALAEELGTNQVLPYESYKEHLHEFDIIITAVSTKEYIISEAEMHAAMLKRRLKPVIILDLGLPRNVDPEVSKVQNMFLKDIDALKHIIDKNLERRSGELPKVHAIIDEELVAFGQWINTLKVRPTIVDLQSKFIEIKEKEIERYRHKVSEEELRRMEHLTDRIMKKILHHPIKMLKAPISTSDSMPSRVDLVRNVFDLEEPNQSH</sequence>
<keyword id="KW-0149">Chlorophyll biosynthesis</keyword>
<keyword id="KW-0521">NADP</keyword>
<keyword id="KW-0560">Oxidoreductase</keyword>
<keyword id="KW-0627">Porphyrin biosynthesis</keyword>
<gene>
    <name evidence="1" type="primary">hemA</name>
    <name type="ordered locus">Cvib_1244</name>
</gene>
<name>HEM1_CHLPM</name>
<reference key="1">
    <citation type="submission" date="2007-03" db="EMBL/GenBank/DDBJ databases">
        <title>Complete sequence of Prosthecochloris vibrioformis DSM 265.</title>
        <authorList>
            <consortium name="US DOE Joint Genome Institute"/>
            <person name="Copeland A."/>
            <person name="Lucas S."/>
            <person name="Lapidus A."/>
            <person name="Barry K."/>
            <person name="Detter J.C."/>
            <person name="Glavina del Rio T."/>
            <person name="Hammon N."/>
            <person name="Israni S."/>
            <person name="Pitluck S."/>
            <person name="Schmutz J."/>
            <person name="Larimer F."/>
            <person name="Land M."/>
            <person name="Hauser L."/>
            <person name="Mikhailova N."/>
            <person name="Li T."/>
            <person name="Overmann J."/>
            <person name="Schuster S.C."/>
            <person name="Bryant D.A."/>
            <person name="Richardson P."/>
        </authorList>
    </citation>
    <scope>NUCLEOTIDE SEQUENCE [LARGE SCALE GENOMIC DNA]</scope>
    <source>
        <strain>DSM 265 / 1930</strain>
    </source>
</reference>
<accession>A4SFJ7</accession>
<dbReference type="EC" id="1.2.1.70" evidence="1"/>
<dbReference type="EMBL" id="CP000607">
    <property type="protein sequence ID" value="ABP37256.1"/>
    <property type="molecule type" value="Genomic_DNA"/>
</dbReference>
<dbReference type="SMR" id="A4SFJ7"/>
<dbReference type="STRING" id="290318.Cvib_1244"/>
<dbReference type="KEGG" id="pvi:Cvib_1244"/>
<dbReference type="eggNOG" id="COG0373">
    <property type="taxonomic scope" value="Bacteria"/>
</dbReference>
<dbReference type="HOGENOM" id="CLU_035113_2_2_10"/>
<dbReference type="OrthoDB" id="110209at2"/>
<dbReference type="UniPathway" id="UPA00251">
    <property type="reaction ID" value="UER00316"/>
</dbReference>
<dbReference type="UniPathway" id="UPA00668"/>
<dbReference type="GO" id="GO:0008883">
    <property type="term" value="F:glutamyl-tRNA reductase activity"/>
    <property type="evidence" value="ECO:0007669"/>
    <property type="project" value="UniProtKB-UniRule"/>
</dbReference>
<dbReference type="GO" id="GO:0050661">
    <property type="term" value="F:NADP binding"/>
    <property type="evidence" value="ECO:0007669"/>
    <property type="project" value="InterPro"/>
</dbReference>
<dbReference type="GO" id="GO:0015995">
    <property type="term" value="P:chlorophyll biosynthetic process"/>
    <property type="evidence" value="ECO:0007669"/>
    <property type="project" value="UniProtKB-UniPathway"/>
</dbReference>
<dbReference type="GO" id="GO:0019353">
    <property type="term" value="P:protoporphyrinogen IX biosynthetic process from glutamate"/>
    <property type="evidence" value="ECO:0007669"/>
    <property type="project" value="TreeGrafter"/>
</dbReference>
<dbReference type="CDD" id="cd05213">
    <property type="entry name" value="NAD_bind_Glutamyl_tRNA_reduct"/>
    <property type="match status" value="1"/>
</dbReference>
<dbReference type="FunFam" id="3.30.460.30:FF:000001">
    <property type="entry name" value="Glutamyl-tRNA reductase"/>
    <property type="match status" value="1"/>
</dbReference>
<dbReference type="FunFam" id="3.40.50.720:FF:000031">
    <property type="entry name" value="Glutamyl-tRNA reductase"/>
    <property type="match status" value="1"/>
</dbReference>
<dbReference type="Gene3D" id="3.30.460.30">
    <property type="entry name" value="Glutamyl-tRNA reductase, N-terminal domain"/>
    <property type="match status" value="1"/>
</dbReference>
<dbReference type="Gene3D" id="3.40.50.720">
    <property type="entry name" value="NAD(P)-binding Rossmann-like Domain"/>
    <property type="match status" value="1"/>
</dbReference>
<dbReference type="HAMAP" id="MF_00087">
    <property type="entry name" value="Glu_tRNA_reductase"/>
    <property type="match status" value="1"/>
</dbReference>
<dbReference type="InterPro" id="IPR000343">
    <property type="entry name" value="4pyrrol_synth_GluRdtase"/>
</dbReference>
<dbReference type="InterPro" id="IPR015896">
    <property type="entry name" value="4pyrrol_synth_GluRdtase_dimer"/>
</dbReference>
<dbReference type="InterPro" id="IPR015895">
    <property type="entry name" value="4pyrrol_synth_GluRdtase_N"/>
</dbReference>
<dbReference type="InterPro" id="IPR018214">
    <property type="entry name" value="GluRdtase_CS"/>
</dbReference>
<dbReference type="InterPro" id="IPR036453">
    <property type="entry name" value="GluRdtase_dimer_dom_sf"/>
</dbReference>
<dbReference type="InterPro" id="IPR036343">
    <property type="entry name" value="GluRdtase_N_sf"/>
</dbReference>
<dbReference type="InterPro" id="IPR036291">
    <property type="entry name" value="NAD(P)-bd_dom_sf"/>
</dbReference>
<dbReference type="InterPro" id="IPR006151">
    <property type="entry name" value="Shikm_DH/Glu-tRNA_Rdtase"/>
</dbReference>
<dbReference type="NCBIfam" id="TIGR01035">
    <property type="entry name" value="hemA"/>
    <property type="match status" value="1"/>
</dbReference>
<dbReference type="PANTHER" id="PTHR43013">
    <property type="entry name" value="GLUTAMYL-TRNA REDUCTASE"/>
    <property type="match status" value="1"/>
</dbReference>
<dbReference type="PANTHER" id="PTHR43013:SF1">
    <property type="entry name" value="GLUTAMYL-TRNA REDUCTASE"/>
    <property type="match status" value="1"/>
</dbReference>
<dbReference type="Pfam" id="PF00745">
    <property type="entry name" value="GlutR_dimer"/>
    <property type="match status" value="1"/>
</dbReference>
<dbReference type="Pfam" id="PF05201">
    <property type="entry name" value="GlutR_N"/>
    <property type="match status" value="1"/>
</dbReference>
<dbReference type="Pfam" id="PF01488">
    <property type="entry name" value="Shikimate_DH"/>
    <property type="match status" value="1"/>
</dbReference>
<dbReference type="PIRSF" id="PIRSF000445">
    <property type="entry name" value="4pyrrol_synth_GluRdtase"/>
    <property type="match status" value="1"/>
</dbReference>
<dbReference type="SUPFAM" id="SSF69742">
    <property type="entry name" value="Glutamyl tRNA-reductase catalytic, N-terminal domain"/>
    <property type="match status" value="1"/>
</dbReference>
<dbReference type="SUPFAM" id="SSF69075">
    <property type="entry name" value="Glutamyl tRNA-reductase dimerization domain"/>
    <property type="match status" value="1"/>
</dbReference>
<dbReference type="SUPFAM" id="SSF51735">
    <property type="entry name" value="NAD(P)-binding Rossmann-fold domains"/>
    <property type="match status" value="1"/>
</dbReference>
<dbReference type="PROSITE" id="PS00747">
    <property type="entry name" value="GLUTR"/>
    <property type="match status" value="1"/>
</dbReference>
<organism>
    <name type="scientific">Chlorobium phaeovibrioides (strain DSM 265 / 1930)</name>
    <name type="common">Prosthecochloris vibrioformis (strain DSM 265)</name>
    <dbReference type="NCBI Taxonomy" id="290318"/>
    <lineage>
        <taxon>Bacteria</taxon>
        <taxon>Pseudomonadati</taxon>
        <taxon>Chlorobiota</taxon>
        <taxon>Chlorobiia</taxon>
        <taxon>Chlorobiales</taxon>
        <taxon>Chlorobiaceae</taxon>
        <taxon>Chlorobium/Pelodictyon group</taxon>
        <taxon>Chlorobium</taxon>
    </lineage>
</organism>
<comment type="function">
    <text evidence="1">Catalyzes the NADPH-dependent reduction of glutamyl-tRNA(Glu) to glutamate 1-semialdehyde (GSA).</text>
</comment>
<comment type="catalytic activity">
    <reaction evidence="1">
        <text>(S)-4-amino-5-oxopentanoate + tRNA(Glu) + NADP(+) = L-glutamyl-tRNA(Glu) + NADPH + H(+)</text>
        <dbReference type="Rhea" id="RHEA:12344"/>
        <dbReference type="Rhea" id="RHEA-COMP:9663"/>
        <dbReference type="Rhea" id="RHEA-COMP:9680"/>
        <dbReference type="ChEBI" id="CHEBI:15378"/>
        <dbReference type="ChEBI" id="CHEBI:57501"/>
        <dbReference type="ChEBI" id="CHEBI:57783"/>
        <dbReference type="ChEBI" id="CHEBI:58349"/>
        <dbReference type="ChEBI" id="CHEBI:78442"/>
        <dbReference type="ChEBI" id="CHEBI:78520"/>
        <dbReference type="EC" id="1.2.1.70"/>
    </reaction>
</comment>
<comment type="pathway">
    <text evidence="1">Porphyrin-containing compound metabolism; protoporphyrin-IX biosynthesis; 5-aminolevulinate from L-glutamyl-tRNA(Glu): step 1/2.</text>
</comment>
<comment type="pathway">
    <text evidence="1">Porphyrin-containing compound metabolism; chlorophyll biosynthesis.</text>
</comment>
<comment type="subunit">
    <text evidence="1">Homodimer.</text>
</comment>
<comment type="domain">
    <text evidence="1">Possesses an unusual extended V-shaped dimeric structure with each monomer consisting of three distinct domains arranged along a curved 'spinal' alpha-helix. The N-terminal catalytic domain specifically recognizes the glutamate moiety of the substrate. The second domain is the NADPH-binding domain, and the third C-terminal domain is responsible for dimerization.</text>
</comment>
<comment type="miscellaneous">
    <text evidence="1">During catalysis, the active site Cys acts as a nucleophile attacking the alpha-carbonyl group of tRNA-bound glutamate with the formation of a thioester intermediate between enzyme and glutamate, and the concomitant release of tRNA(Glu). The thioester intermediate is finally reduced by direct hydride transfer from NADPH, to form the product GSA.</text>
</comment>
<comment type="similarity">
    <text evidence="1">Belongs to the glutamyl-tRNA reductase family.</text>
</comment>
<feature type="chain" id="PRO_1000075418" description="Glutamyl-tRNA reductase">
    <location>
        <begin position="1"/>
        <end position="425"/>
    </location>
</feature>
<feature type="active site" description="Nucleophile" evidence="1">
    <location>
        <position position="50"/>
    </location>
</feature>
<feature type="binding site" evidence="1">
    <location>
        <begin position="49"/>
        <end position="52"/>
    </location>
    <ligand>
        <name>substrate</name>
    </ligand>
</feature>
<feature type="binding site" evidence="1">
    <location>
        <position position="109"/>
    </location>
    <ligand>
        <name>substrate</name>
    </ligand>
</feature>
<feature type="binding site" evidence="1">
    <location>
        <begin position="114"/>
        <end position="116"/>
    </location>
    <ligand>
        <name>substrate</name>
    </ligand>
</feature>
<feature type="binding site" evidence="1">
    <location>
        <position position="120"/>
    </location>
    <ligand>
        <name>substrate</name>
    </ligand>
</feature>
<feature type="binding site" evidence="1">
    <location>
        <begin position="189"/>
        <end position="194"/>
    </location>
    <ligand>
        <name>NADP(+)</name>
        <dbReference type="ChEBI" id="CHEBI:58349"/>
    </ligand>
</feature>
<feature type="site" description="Important for activity" evidence="1">
    <location>
        <position position="99"/>
    </location>
</feature>
<evidence type="ECO:0000255" key="1">
    <source>
        <dbReference type="HAMAP-Rule" id="MF_00087"/>
    </source>
</evidence>